<name>TSTA_DICDI</name>
<gene>
    <name evidence="3" type="primary">tstA</name>
    <name evidence="5" type="ORF">DDB0186293</name>
</gene>
<feature type="chain" id="PRO_0000445758" description="TSET complex member tstA">
    <location>
        <begin position="1"/>
        <end position="1408"/>
    </location>
</feature>
<feature type="region of interest" description="Disordered" evidence="1">
    <location>
        <begin position="259"/>
        <end position="347"/>
    </location>
</feature>
<feature type="region of interest" description="Disordered" evidence="1">
    <location>
        <begin position="998"/>
        <end position="1055"/>
    </location>
</feature>
<feature type="region of interest" description="Disordered" evidence="1">
    <location>
        <begin position="1091"/>
        <end position="1139"/>
    </location>
</feature>
<feature type="compositionally biased region" description="Low complexity" evidence="1">
    <location>
        <begin position="266"/>
        <end position="308"/>
    </location>
</feature>
<feature type="compositionally biased region" description="Polar residues" evidence="1">
    <location>
        <begin position="309"/>
        <end position="318"/>
    </location>
</feature>
<feature type="compositionally biased region" description="Low complexity" evidence="1">
    <location>
        <begin position="319"/>
        <end position="347"/>
    </location>
</feature>
<feature type="compositionally biased region" description="Low complexity" evidence="1">
    <location>
        <begin position="998"/>
        <end position="1051"/>
    </location>
</feature>
<sequence length="1408" mass="156889">MEIEIYDELNSSDSLKQINGLSKLNQFWINQGRDPTLFFTSIIKLISETDNKTTRILCYSILKSCKCTPSDWSLAIPLLVKDLNSDDNEVVISILKTLPHISSIFTELLMMGNADFGPLVRHGNPSVRKTALDTLTSLLFYRKSILQSYKSFVSTGWELIVDRILEEPIPMVYQSSFSAISSLFSEISRSVSHSDELDNSVQKRQVLSYYADWISLKLIDHFDLLLNRAQHIDINQRHSTVNTLTYLVDTISRSSGTPFWPTSFDNNNNNNNNQQINNNNNNNNNNNNNNNNNNNNNNNNNNNNNQNNLINGISSMNLSSITGTTTTTTTTGNSPITSPTSPTSIIANTASSNKTKQISSPQNIVSILVEYFLSQLDSSNDSLVFAVGKAILDLLLTQQNQHNENWINPVLTAFIGLLRREGVSLNPLPILLAIMSVLPMLGDDLLFCTLSRIFPSIKSITDSNQRVSYLIRTFELIIDRHVTSSGKSSLFTPLMTTDCLLMAFQDESSSFREEIIVSMVASHHNILSKYIEIESEKNSNNNNSSSGNSGGGSGGSVKFSTSGNLFYLHQAALNISEVCLKCITWQSERISAIEYCIRFVDWLCRVTLSSSSSSNNSGNGSESQYGIKLISLLRSDLLDQINKIPSDYICLQAVFLICTHLLRSPTNKVYEQSDAGLLISLLRRRFLFLDNQPKFTQYNGNIRDMIMGVSQFGRVSPASLHSLSGYWLGALECLYLMGLHIPSVEATVQRTLEEILATYPHNKSVYSRARFIRRMLFSSTSSALDAQSLGKYSTIRNLNSFTNYTIDFSYCIPIEQLEASNSLHSISDIFAYECKKAITGLVGVHYGSSIRDKSSRDVTLISGASDPVWIEVSHTTHPTLNTITLHVQVTNVIHFSIKNVNIMIGLSGHLDFPYPQTNCKHNIPKLLPEKSYSFEVPLNVSSLDYNLVTFKLTFNQPSGLCESENNINLNNIHTKINNYQQSSDQLLVQSIQQQQQQQQSSSQQQSQQSQQQQYQPQPISSVNSGLSSYSLNSNNSGSLNSSANSHSISTSAVGSPGTASFISSSLLSNAQSSSPTTSSPLSNVINQNIISSSSSSSSNANQITSTTTPSSTTNSNNNTTSSSSSTNPNPNPNSHTNLNSIVGSGINQPIINNQIIQSLSITTNNPSANIIQFSPIEIRCSDYIFDWNQFLIPFKYNKHQFIQQWPRFEAVFSIDVVFEGFVSVASIFDCLSALPLHNVLNSEFGNSNFHFAFSSSTWFNEQFCFTISGMEKCLSFPEDYSIYYTSPNGQSLPKYKVYHARFEFRSSSSSLLASFESIIDQWINKLPRPTSDQFIARLLAPDEKSLFSITNITQDYQAPKNHQSLANTPLSNIVDDEIALLNQWKDFKKSQEQTKKLFSQLALDQDFY</sequence>
<dbReference type="EMBL" id="AAFI01000116">
    <property type="protein sequence ID" value="EAL64952.1"/>
    <property type="molecule type" value="Genomic_DNA"/>
</dbReference>
<dbReference type="RefSeq" id="XP_639969.1">
    <property type="nucleotide sequence ID" value="XM_634877.1"/>
</dbReference>
<dbReference type="SMR" id="Q54NU8"/>
<dbReference type="PaxDb" id="44689-DDB0304556"/>
<dbReference type="KEGG" id="ddi:DDB_G0284977"/>
<dbReference type="dictyBase" id="DDB_G0284977">
    <property type="gene designation" value="tstA"/>
</dbReference>
<dbReference type="VEuPathDB" id="AmoebaDB:DDB_G0284977"/>
<dbReference type="eggNOG" id="ENOG502RF61">
    <property type="taxonomic scope" value="Eukaryota"/>
</dbReference>
<dbReference type="HOGENOM" id="CLU_253872_0_0_1"/>
<dbReference type="OMA" id="WEIVCTG"/>
<dbReference type="PRO" id="PR:Q54NU8"/>
<dbReference type="GO" id="GO:0030117">
    <property type="term" value="C:membrane coat"/>
    <property type="evidence" value="ECO:0007669"/>
    <property type="project" value="InterPro"/>
</dbReference>
<dbReference type="GO" id="GO:0006897">
    <property type="term" value="P:endocytosis"/>
    <property type="evidence" value="ECO:0007669"/>
    <property type="project" value="InterPro"/>
</dbReference>
<dbReference type="GO" id="GO:0006886">
    <property type="term" value="P:intracellular protein transport"/>
    <property type="evidence" value="ECO:0007669"/>
    <property type="project" value="InterPro"/>
</dbReference>
<dbReference type="Gene3D" id="1.25.10.10">
    <property type="entry name" value="Leucine-rich Repeat Variant"/>
    <property type="match status" value="1"/>
</dbReference>
<dbReference type="InterPro" id="IPR011989">
    <property type="entry name" value="ARM-like"/>
</dbReference>
<dbReference type="InterPro" id="IPR016024">
    <property type="entry name" value="ARM-type_fold"/>
</dbReference>
<dbReference type="InterPro" id="IPR002553">
    <property type="entry name" value="Clathrin/coatomer_adapt-like_N"/>
</dbReference>
<dbReference type="InterPro" id="IPR037501">
    <property type="entry name" value="TPLATE"/>
</dbReference>
<dbReference type="PANTHER" id="PTHR36029:SF1">
    <property type="entry name" value="PROTEIN TPLATE"/>
    <property type="match status" value="1"/>
</dbReference>
<dbReference type="PANTHER" id="PTHR36029">
    <property type="entry name" value="TSET COMPLEX MEMBER TSTA"/>
    <property type="match status" value="1"/>
</dbReference>
<dbReference type="Pfam" id="PF01602">
    <property type="entry name" value="Adaptin_N"/>
    <property type="match status" value="1"/>
</dbReference>
<dbReference type="SUPFAM" id="SSF48371">
    <property type="entry name" value="ARM repeat"/>
    <property type="match status" value="1"/>
</dbReference>
<reference key="1">
    <citation type="journal article" date="2005" name="Nature">
        <title>The genome of the social amoeba Dictyostelium discoideum.</title>
        <authorList>
            <person name="Eichinger L."/>
            <person name="Pachebat J.A."/>
            <person name="Gloeckner G."/>
            <person name="Rajandream M.A."/>
            <person name="Sucgang R."/>
            <person name="Berriman M."/>
            <person name="Song J."/>
            <person name="Olsen R."/>
            <person name="Szafranski K."/>
            <person name="Xu Q."/>
            <person name="Tunggal B."/>
            <person name="Kummerfeld S."/>
            <person name="Madera M."/>
            <person name="Konfortov B.A."/>
            <person name="Rivero F."/>
            <person name="Bankier A.T."/>
            <person name="Lehmann R."/>
            <person name="Hamlin N."/>
            <person name="Davies R."/>
            <person name="Gaudet P."/>
            <person name="Fey P."/>
            <person name="Pilcher K."/>
            <person name="Chen G."/>
            <person name="Saunders D."/>
            <person name="Sodergren E.J."/>
            <person name="Davis P."/>
            <person name="Kerhornou A."/>
            <person name="Nie X."/>
            <person name="Hall N."/>
            <person name="Anjard C."/>
            <person name="Hemphill L."/>
            <person name="Bason N."/>
            <person name="Farbrother P."/>
            <person name="Desany B."/>
            <person name="Just E."/>
            <person name="Morio T."/>
            <person name="Rost R."/>
            <person name="Churcher C.M."/>
            <person name="Cooper J."/>
            <person name="Haydock S."/>
            <person name="van Driessche N."/>
            <person name="Cronin A."/>
            <person name="Goodhead I."/>
            <person name="Muzny D.M."/>
            <person name="Mourier T."/>
            <person name="Pain A."/>
            <person name="Lu M."/>
            <person name="Harper D."/>
            <person name="Lindsay R."/>
            <person name="Hauser H."/>
            <person name="James K.D."/>
            <person name="Quiles M."/>
            <person name="Madan Babu M."/>
            <person name="Saito T."/>
            <person name="Buchrieser C."/>
            <person name="Wardroper A."/>
            <person name="Felder M."/>
            <person name="Thangavelu M."/>
            <person name="Johnson D."/>
            <person name="Knights A."/>
            <person name="Loulseged H."/>
            <person name="Mungall K.L."/>
            <person name="Oliver K."/>
            <person name="Price C."/>
            <person name="Quail M.A."/>
            <person name="Urushihara H."/>
            <person name="Hernandez J."/>
            <person name="Rabbinowitsch E."/>
            <person name="Steffen D."/>
            <person name="Sanders M."/>
            <person name="Ma J."/>
            <person name="Kohara Y."/>
            <person name="Sharp S."/>
            <person name="Simmonds M.N."/>
            <person name="Spiegler S."/>
            <person name="Tivey A."/>
            <person name="Sugano S."/>
            <person name="White B."/>
            <person name="Walker D."/>
            <person name="Woodward J.R."/>
            <person name="Winckler T."/>
            <person name="Tanaka Y."/>
            <person name="Shaulsky G."/>
            <person name="Schleicher M."/>
            <person name="Weinstock G.M."/>
            <person name="Rosenthal A."/>
            <person name="Cox E.C."/>
            <person name="Chisholm R.L."/>
            <person name="Gibbs R.A."/>
            <person name="Loomis W.F."/>
            <person name="Platzer M."/>
            <person name="Kay R.R."/>
            <person name="Williams J.G."/>
            <person name="Dear P.H."/>
            <person name="Noegel A.A."/>
            <person name="Barrell B.G."/>
            <person name="Kuspa A."/>
        </authorList>
    </citation>
    <scope>NUCLEOTIDE SEQUENCE [LARGE SCALE GENOMIC DNA]</scope>
    <source>
        <strain>AX4</strain>
    </source>
</reference>
<reference evidence="4" key="2">
    <citation type="journal article" date="2014" name="Elife">
        <title>Characterization of TSET, an ancient and widespread membrane trafficking complex.</title>
        <authorList>
            <person name="Hirst J."/>
            <person name="Schlacht A."/>
            <person name="Norcott J.P."/>
            <person name="Traynor D."/>
            <person name="Bloomfield G."/>
            <person name="Antrobus R."/>
            <person name="Kay R.R."/>
            <person name="Dacks J.B."/>
            <person name="Robinson M.S."/>
        </authorList>
    </citation>
    <scope>IDENTIFICATION IN THE TSET COMPLEX</scope>
    <scope>IDENTIFICATION BY MASS SPECTROMETRY</scope>
</reference>
<comment type="subunit">
    <text evidence="2">Component of the TSET complex, a heterohexamer composed of tstA, tstB, tstC, tstD, tstE and tstF, which may act in plasma membrane turnover. tstA, tstB, tstC and tstD are likely to be the core complex members with tstE and tstF acting as associated scaffold proteins.</text>
</comment>
<comment type="similarity">
    <text evidence="4">Belongs to the TPLATE family.</text>
</comment>
<evidence type="ECO:0000256" key="1">
    <source>
        <dbReference type="SAM" id="MobiDB-lite"/>
    </source>
</evidence>
<evidence type="ECO:0000269" key="2">
    <source>
    </source>
</evidence>
<evidence type="ECO:0000303" key="3">
    <source>
    </source>
</evidence>
<evidence type="ECO:0000305" key="4"/>
<evidence type="ECO:0000312" key="5">
    <source>
        <dbReference type="EMBL" id="EAL64952.1"/>
    </source>
</evidence>
<organism>
    <name type="scientific">Dictyostelium discoideum</name>
    <name type="common">Social amoeba</name>
    <dbReference type="NCBI Taxonomy" id="44689"/>
    <lineage>
        <taxon>Eukaryota</taxon>
        <taxon>Amoebozoa</taxon>
        <taxon>Evosea</taxon>
        <taxon>Eumycetozoa</taxon>
        <taxon>Dictyostelia</taxon>
        <taxon>Dictyosteliales</taxon>
        <taxon>Dictyosteliaceae</taxon>
        <taxon>Dictyostelium</taxon>
    </lineage>
</organism>
<protein>
    <recommendedName>
        <fullName evidence="4">TSET complex member tstA</fullName>
    </recommendedName>
    <alternativeName>
        <fullName evidence="3">Protein TPLATE</fullName>
    </alternativeName>
</protein>
<accession>Q54NU8</accession>
<proteinExistence type="evidence at protein level"/>